<keyword id="KW-0044">Antibiotic</keyword>
<keyword id="KW-0929">Antimicrobial</keyword>
<keyword id="KW-0204">Cytolysis</keyword>
<keyword id="KW-0295">Fungicide</keyword>
<keyword id="KW-0354">Hemolysis</keyword>
<keyword id="KW-0406">Ion transport</keyword>
<keyword id="KW-0472">Membrane</keyword>
<keyword id="KW-0964">Secreted</keyword>
<keyword id="KW-0732">Signal</keyword>
<keyword id="KW-1052">Target cell membrane</keyword>
<keyword id="KW-1053">Target membrane</keyword>
<keyword id="KW-0812">Transmembrane</keyword>
<keyword id="KW-0813">Transport</keyword>
<name>NDB2_UROYA</name>
<reference key="1">
    <citation type="journal article" date="2013" name="Toxicon">
        <title>Characterization of the venom from the Australian scorpion Urodacus yaschenkoi: molecular mass analysis of components, cDNA sequences and peptides with antimicrobial activity.</title>
        <authorList>
            <person name="Luna-Ramirez K."/>
            <person name="Quintero-Hernandez V."/>
            <person name="Vargas-Jaimes L."/>
            <person name="Batista C.V."/>
            <person name="Winkel K.D."/>
            <person name="Possani L.D."/>
        </authorList>
    </citation>
    <scope>NUCLEOTIDE SEQUENCE [MRNA]</scope>
    <source>
        <tissue>Venom gland</tissue>
    </source>
</reference>
<dbReference type="EMBL" id="JX274243">
    <property type="protein sequence ID" value="AGA82757.1"/>
    <property type="molecule type" value="mRNA"/>
</dbReference>
<dbReference type="GO" id="GO:0005576">
    <property type="term" value="C:extracellular region"/>
    <property type="evidence" value="ECO:0007669"/>
    <property type="project" value="UniProtKB-SubCell"/>
</dbReference>
<dbReference type="GO" id="GO:0016020">
    <property type="term" value="C:membrane"/>
    <property type="evidence" value="ECO:0007669"/>
    <property type="project" value="UniProtKB-KW"/>
</dbReference>
<dbReference type="GO" id="GO:0044218">
    <property type="term" value="C:other organism cell membrane"/>
    <property type="evidence" value="ECO:0007669"/>
    <property type="project" value="UniProtKB-KW"/>
</dbReference>
<dbReference type="GO" id="GO:0042742">
    <property type="term" value="P:defense response to bacterium"/>
    <property type="evidence" value="ECO:0007669"/>
    <property type="project" value="UniProtKB-KW"/>
</dbReference>
<dbReference type="GO" id="GO:0050832">
    <property type="term" value="P:defense response to fungus"/>
    <property type="evidence" value="ECO:0007669"/>
    <property type="project" value="UniProtKB-KW"/>
</dbReference>
<dbReference type="GO" id="GO:0044179">
    <property type="term" value="P:hemolysis in another organism"/>
    <property type="evidence" value="ECO:0007669"/>
    <property type="project" value="InterPro"/>
</dbReference>
<dbReference type="GO" id="GO:0006811">
    <property type="term" value="P:monoatomic ion transport"/>
    <property type="evidence" value="ECO:0007669"/>
    <property type="project" value="UniProtKB-KW"/>
</dbReference>
<dbReference type="InterPro" id="IPR012526">
    <property type="entry name" value="Antimicrobial_7"/>
</dbReference>
<dbReference type="Pfam" id="PF08102">
    <property type="entry name" value="Antimicrobial_7"/>
    <property type="match status" value="1"/>
</dbReference>
<comment type="function">
    <text evidence="1">At high concentrations, acts as a pore former in cellular membranes and causes the leakage of the cells. At submicromolar concentrations, degranulates granulocytes and has a weak hemolytic activity against human erythrocytes. Also strongly inhibits the production of superoxide anions. Has a strong antibacterial activity against Gram-negative bacteria but is less active against Gram-positive bacteria. Also has antifungal activity.</text>
</comment>
<comment type="subcellular location">
    <subcellularLocation>
        <location evidence="1">Secreted</location>
    </subcellularLocation>
    <subcellularLocation>
        <location evidence="1">Target cell membrane</location>
    </subcellularLocation>
    <text evidence="1">Forms a helical membrane channel in the prey.</text>
</comment>
<comment type="tissue specificity">
    <text evidence="4">Expressed by the venom gland.</text>
</comment>
<comment type="similarity">
    <text evidence="3">Belongs to the non-disulfide-bridged peptide (NDBP) superfamily. Long chain multifunctional peptide (group 2) family.</text>
</comment>
<protein>
    <recommendedName>
        <fullName>Antimicrobial peptide Con22</fullName>
    </recommendedName>
</protein>
<evidence type="ECO:0000250" key="1">
    <source>
        <dbReference type="UniProtKB" id="P83313"/>
    </source>
</evidence>
<evidence type="ECO:0000255" key="2"/>
<evidence type="ECO:0000305" key="3"/>
<evidence type="ECO:0000305" key="4">
    <source>
    </source>
</evidence>
<sequence length="81" mass="8929">MNAKVMLVCLLVTMLVMEPAEAGIWSWIKKTAKKVWNSDVAKKLKGKALNVAKDFVAEKIGATPAEAGQIPFDEFMNVLYS</sequence>
<feature type="signal peptide" evidence="2">
    <location>
        <begin position="1"/>
        <end position="22"/>
    </location>
</feature>
<feature type="chain" id="PRO_5001091937" description="Antimicrobial peptide Con22" evidence="4">
    <location>
        <begin position="23"/>
        <end position="65"/>
    </location>
</feature>
<feature type="propeptide" id="PRO_5001091938" evidence="1">
    <location>
        <begin position="66"/>
        <end position="81"/>
    </location>
</feature>
<proteinExistence type="inferred from homology"/>
<accession>L0GBQ6</accession>
<organism>
    <name type="scientific">Urodacus yaschenkoi</name>
    <name type="common">Inland robust scorpion</name>
    <dbReference type="NCBI Taxonomy" id="1273102"/>
    <lineage>
        <taxon>Eukaryota</taxon>
        <taxon>Metazoa</taxon>
        <taxon>Ecdysozoa</taxon>
        <taxon>Arthropoda</taxon>
        <taxon>Chelicerata</taxon>
        <taxon>Arachnida</taxon>
        <taxon>Scorpiones</taxon>
        <taxon>Iurida</taxon>
        <taxon>Scorpionoidea</taxon>
        <taxon>Scorpionidae</taxon>
        <taxon>Urodacinae</taxon>
        <taxon>Urodacus</taxon>
    </lineage>
</organism>